<comment type="function">
    <text evidence="1">PPIases accelerate the folding of proteins. It catalyzes the cis-trans isomerization of proline imidic peptide bonds in oligopeptides (By similarity).</text>
</comment>
<comment type="catalytic activity">
    <reaction>
        <text>[protein]-peptidylproline (omega=180) = [protein]-peptidylproline (omega=0)</text>
        <dbReference type="Rhea" id="RHEA:16237"/>
        <dbReference type="Rhea" id="RHEA-COMP:10747"/>
        <dbReference type="Rhea" id="RHEA-COMP:10748"/>
        <dbReference type="ChEBI" id="CHEBI:83833"/>
        <dbReference type="ChEBI" id="CHEBI:83834"/>
        <dbReference type="EC" id="5.2.1.8"/>
    </reaction>
</comment>
<comment type="subcellular location">
    <subcellularLocation>
        <location evidence="1">Cytoplasm</location>
    </subcellularLocation>
</comment>
<comment type="tissue specificity">
    <text evidence="3 4">Ubiquitous.</text>
</comment>
<comment type="induction">
    <text evidence="3">Down-regulated by pathogen.</text>
</comment>
<comment type="similarity">
    <text evidence="5">Belongs to the cyclophilin-type PPIase family.</text>
</comment>
<proteinExistence type="evidence at transcript level"/>
<gene>
    <name type="primary">CYP18-2</name>
    <name type="ordered locus">At2g36130</name>
    <name type="ORF">F9C22.6</name>
</gene>
<accession>Q9SIH1</accession>
<accession>Q8LF78</accession>
<reference key="1">
    <citation type="journal article" date="2004" name="Plant Physiol.">
        <title>The Arabidopsis cyclophilin gene family.</title>
        <authorList>
            <person name="Romano P.G.N."/>
            <person name="Horton P."/>
            <person name="Gray J.E."/>
        </authorList>
    </citation>
    <scope>NUCLEOTIDE SEQUENCE [MRNA]</scope>
    <scope>TISSUE SPECIFICITY</scope>
    <scope>GENE FAMILY</scope>
    <scope>NOMENCLATURE</scope>
</reference>
<reference key="2">
    <citation type="journal article" date="1999" name="Nature">
        <title>Sequence and analysis of chromosome 2 of the plant Arabidopsis thaliana.</title>
        <authorList>
            <person name="Lin X."/>
            <person name="Kaul S."/>
            <person name="Rounsley S.D."/>
            <person name="Shea T.P."/>
            <person name="Benito M.-I."/>
            <person name="Town C.D."/>
            <person name="Fujii C.Y."/>
            <person name="Mason T.M."/>
            <person name="Bowman C.L."/>
            <person name="Barnstead M.E."/>
            <person name="Feldblyum T.V."/>
            <person name="Buell C.R."/>
            <person name="Ketchum K.A."/>
            <person name="Lee J.J."/>
            <person name="Ronning C.M."/>
            <person name="Koo H.L."/>
            <person name="Moffat K.S."/>
            <person name="Cronin L.A."/>
            <person name="Shen M."/>
            <person name="Pai G."/>
            <person name="Van Aken S."/>
            <person name="Umayam L."/>
            <person name="Tallon L.J."/>
            <person name="Gill J.E."/>
            <person name="Adams M.D."/>
            <person name="Carrera A.J."/>
            <person name="Creasy T.H."/>
            <person name="Goodman H.M."/>
            <person name="Somerville C.R."/>
            <person name="Copenhaver G.P."/>
            <person name="Preuss D."/>
            <person name="Nierman W.C."/>
            <person name="White O."/>
            <person name="Eisen J.A."/>
            <person name="Salzberg S.L."/>
            <person name="Fraser C.M."/>
            <person name="Venter J.C."/>
        </authorList>
    </citation>
    <scope>NUCLEOTIDE SEQUENCE [LARGE SCALE GENOMIC DNA]</scope>
    <source>
        <strain>cv. Columbia</strain>
    </source>
</reference>
<reference key="3">
    <citation type="journal article" date="2017" name="Plant J.">
        <title>Araport11: a complete reannotation of the Arabidopsis thaliana reference genome.</title>
        <authorList>
            <person name="Cheng C.Y."/>
            <person name="Krishnakumar V."/>
            <person name="Chan A.P."/>
            <person name="Thibaud-Nissen F."/>
            <person name="Schobel S."/>
            <person name="Town C.D."/>
        </authorList>
    </citation>
    <scope>GENOME REANNOTATION</scope>
    <source>
        <strain>cv. Columbia</strain>
    </source>
</reference>
<reference key="4">
    <citation type="journal article" date="2003" name="Science">
        <title>Empirical analysis of transcriptional activity in the Arabidopsis genome.</title>
        <authorList>
            <person name="Yamada K."/>
            <person name="Lim J."/>
            <person name="Dale J.M."/>
            <person name="Chen H."/>
            <person name="Shinn P."/>
            <person name="Palm C.J."/>
            <person name="Southwick A.M."/>
            <person name="Wu H.C."/>
            <person name="Kim C.J."/>
            <person name="Nguyen M."/>
            <person name="Pham P.K."/>
            <person name="Cheuk R.F."/>
            <person name="Karlin-Newmann G."/>
            <person name="Liu S.X."/>
            <person name="Lam B."/>
            <person name="Sakano H."/>
            <person name="Wu T."/>
            <person name="Yu G."/>
            <person name="Miranda M."/>
            <person name="Quach H.L."/>
            <person name="Tripp M."/>
            <person name="Chang C.H."/>
            <person name="Lee J.M."/>
            <person name="Toriumi M.J."/>
            <person name="Chan M.M."/>
            <person name="Tang C.C."/>
            <person name="Onodera C.S."/>
            <person name="Deng J.M."/>
            <person name="Akiyama K."/>
            <person name="Ansari Y."/>
            <person name="Arakawa T."/>
            <person name="Banh J."/>
            <person name="Banno F."/>
            <person name="Bowser L."/>
            <person name="Brooks S.Y."/>
            <person name="Carninci P."/>
            <person name="Chao Q."/>
            <person name="Choy N."/>
            <person name="Enju A."/>
            <person name="Goldsmith A.D."/>
            <person name="Gurjal M."/>
            <person name="Hansen N.F."/>
            <person name="Hayashizaki Y."/>
            <person name="Johnson-Hopson C."/>
            <person name="Hsuan V.W."/>
            <person name="Iida K."/>
            <person name="Karnes M."/>
            <person name="Khan S."/>
            <person name="Koesema E."/>
            <person name="Ishida J."/>
            <person name="Jiang P.X."/>
            <person name="Jones T."/>
            <person name="Kawai J."/>
            <person name="Kamiya A."/>
            <person name="Meyers C."/>
            <person name="Nakajima M."/>
            <person name="Narusaka M."/>
            <person name="Seki M."/>
            <person name="Sakurai T."/>
            <person name="Satou M."/>
            <person name="Tamse R."/>
            <person name="Vaysberg M."/>
            <person name="Wallender E.K."/>
            <person name="Wong C."/>
            <person name="Yamamura Y."/>
            <person name="Yuan S."/>
            <person name="Shinozaki K."/>
            <person name="Davis R.W."/>
            <person name="Theologis A."/>
            <person name="Ecker J.R."/>
        </authorList>
    </citation>
    <scope>NUCLEOTIDE SEQUENCE [LARGE SCALE MRNA]</scope>
    <source>
        <strain>cv. Columbia</strain>
    </source>
</reference>
<reference key="5">
    <citation type="submission" date="2002-03" db="EMBL/GenBank/DDBJ databases">
        <title>Full-length cDNA from Arabidopsis thaliana.</title>
        <authorList>
            <person name="Brover V.V."/>
            <person name="Troukhan M.E."/>
            <person name="Alexandrov N.A."/>
            <person name="Lu Y.-P."/>
            <person name="Flavell R.B."/>
            <person name="Feldmann K.A."/>
        </authorList>
    </citation>
    <scope>NUCLEOTIDE SEQUENCE [LARGE SCALE MRNA]</scope>
</reference>
<reference key="6">
    <citation type="journal article" date="2004" name="Plant Physiol.">
        <title>Immunophilins and parvulins. Superfamily of peptidyl prolyl isomerases in Arabidopsis.</title>
        <authorList>
            <person name="He Z."/>
            <person name="Li L."/>
            <person name="Luan S."/>
        </authorList>
    </citation>
    <scope>TISSUE SPECIFICITY</scope>
    <scope>GENE FAMILY</scope>
    <scope>NOMENCLATURE</scope>
    <scope>INDUCTION</scope>
</reference>
<protein>
    <recommendedName>
        <fullName>Peptidyl-prolyl cis-trans isomerase CYP18-2</fullName>
        <shortName>PPIase CYP18-2</shortName>
        <ecNumber>5.2.1.8</ecNumber>
    </recommendedName>
    <alternativeName>
        <fullName>Cyclophilin of 18 kDa 2</fullName>
    </alternativeName>
    <alternativeName>
        <fullName>Cyclophilin-18-2</fullName>
    </alternativeName>
</protein>
<name>CP18B_ARATH</name>
<organism>
    <name type="scientific">Arabidopsis thaliana</name>
    <name type="common">Mouse-ear cress</name>
    <dbReference type="NCBI Taxonomy" id="3702"/>
    <lineage>
        <taxon>Eukaryota</taxon>
        <taxon>Viridiplantae</taxon>
        <taxon>Streptophyta</taxon>
        <taxon>Embryophyta</taxon>
        <taxon>Tracheophyta</taxon>
        <taxon>Spermatophyta</taxon>
        <taxon>Magnoliopsida</taxon>
        <taxon>eudicotyledons</taxon>
        <taxon>Gunneridae</taxon>
        <taxon>Pentapetalae</taxon>
        <taxon>rosids</taxon>
        <taxon>malvids</taxon>
        <taxon>Brassicales</taxon>
        <taxon>Brassicaceae</taxon>
        <taxon>Camelineae</taxon>
        <taxon>Arabidopsis</taxon>
    </lineage>
</organism>
<dbReference type="EC" id="5.2.1.8"/>
<dbReference type="EMBL" id="AY568516">
    <property type="protein sequence ID" value="AAS75299.1"/>
    <property type="molecule type" value="mRNA"/>
</dbReference>
<dbReference type="EMBL" id="AC007135">
    <property type="protein sequence ID" value="AAD26970.1"/>
    <property type="molecule type" value="Genomic_DNA"/>
</dbReference>
<dbReference type="EMBL" id="CP002685">
    <property type="protein sequence ID" value="AEC09209.1"/>
    <property type="molecule type" value="Genomic_DNA"/>
</dbReference>
<dbReference type="EMBL" id="AY102153">
    <property type="protein sequence ID" value="AAM26720.1"/>
    <property type="molecule type" value="mRNA"/>
</dbReference>
<dbReference type="EMBL" id="AF389280">
    <property type="protein sequence ID" value="AAK63853.1"/>
    <property type="molecule type" value="mRNA"/>
</dbReference>
<dbReference type="EMBL" id="AY085003">
    <property type="protein sequence ID" value="AAM61561.1"/>
    <property type="molecule type" value="mRNA"/>
</dbReference>
<dbReference type="PIR" id="C84777">
    <property type="entry name" value="C84777"/>
</dbReference>
<dbReference type="RefSeq" id="NP_181157.1">
    <property type="nucleotide sequence ID" value="NM_129172.6"/>
</dbReference>
<dbReference type="SMR" id="Q9SIH1"/>
<dbReference type="BioGRID" id="3530">
    <property type="interactions" value="5"/>
</dbReference>
<dbReference type="FunCoup" id="Q9SIH1">
    <property type="interactions" value="4260"/>
</dbReference>
<dbReference type="IntAct" id="Q9SIH1">
    <property type="interactions" value="2"/>
</dbReference>
<dbReference type="STRING" id="3702.Q9SIH1"/>
<dbReference type="PaxDb" id="3702-AT2G36130.1"/>
<dbReference type="ProteomicsDB" id="240331"/>
<dbReference type="EnsemblPlants" id="AT2G36130.1">
    <property type="protein sequence ID" value="AT2G36130.1"/>
    <property type="gene ID" value="AT2G36130"/>
</dbReference>
<dbReference type="GeneID" id="818186"/>
<dbReference type="Gramene" id="AT2G36130.1">
    <property type="protein sequence ID" value="AT2G36130.1"/>
    <property type="gene ID" value="AT2G36130"/>
</dbReference>
<dbReference type="KEGG" id="ath:AT2G36130"/>
<dbReference type="Araport" id="AT2G36130"/>
<dbReference type="TAIR" id="AT2G36130">
    <property type="gene designation" value="CYCLOPHILIN"/>
</dbReference>
<dbReference type="eggNOG" id="KOG0881">
    <property type="taxonomic scope" value="Eukaryota"/>
</dbReference>
<dbReference type="HOGENOM" id="CLU_012062_16_3_1"/>
<dbReference type="InParanoid" id="Q9SIH1"/>
<dbReference type="OMA" id="ELYNDHA"/>
<dbReference type="OrthoDB" id="271386at2759"/>
<dbReference type="PhylomeDB" id="Q9SIH1"/>
<dbReference type="CD-CODE" id="4299E36E">
    <property type="entry name" value="Nucleolus"/>
</dbReference>
<dbReference type="PRO" id="PR:Q9SIH1"/>
<dbReference type="Proteomes" id="UP000006548">
    <property type="component" value="Chromosome 2"/>
</dbReference>
<dbReference type="ExpressionAtlas" id="Q9SIH1">
    <property type="expression patterns" value="baseline and differential"/>
</dbReference>
<dbReference type="GO" id="GO:0005829">
    <property type="term" value="C:cytosol"/>
    <property type="evidence" value="ECO:0007005"/>
    <property type="project" value="TAIR"/>
</dbReference>
<dbReference type="GO" id="GO:0005783">
    <property type="term" value="C:endoplasmic reticulum"/>
    <property type="evidence" value="ECO:0007005"/>
    <property type="project" value="TAIR"/>
</dbReference>
<dbReference type="GO" id="GO:0003755">
    <property type="term" value="F:peptidyl-prolyl cis-trans isomerase activity"/>
    <property type="evidence" value="ECO:0007669"/>
    <property type="project" value="UniProtKB-KW"/>
</dbReference>
<dbReference type="GO" id="GO:0006457">
    <property type="term" value="P:protein folding"/>
    <property type="evidence" value="ECO:0007669"/>
    <property type="project" value="InterPro"/>
</dbReference>
<dbReference type="FunFam" id="2.40.100.10:FF:000008">
    <property type="entry name" value="Peptidyl-prolyl cis-trans isomerase"/>
    <property type="match status" value="1"/>
</dbReference>
<dbReference type="Gene3D" id="2.40.100.10">
    <property type="entry name" value="Cyclophilin-like"/>
    <property type="match status" value="1"/>
</dbReference>
<dbReference type="InterPro" id="IPR029000">
    <property type="entry name" value="Cyclophilin-like_dom_sf"/>
</dbReference>
<dbReference type="InterPro" id="IPR024936">
    <property type="entry name" value="Cyclophilin-type_PPIase"/>
</dbReference>
<dbReference type="InterPro" id="IPR020892">
    <property type="entry name" value="Cyclophilin-type_PPIase_CS"/>
</dbReference>
<dbReference type="InterPro" id="IPR002130">
    <property type="entry name" value="Cyclophilin-type_PPIase_dom"/>
</dbReference>
<dbReference type="InterPro" id="IPR044666">
    <property type="entry name" value="Cyclophilin_A-like"/>
</dbReference>
<dbReference type="PANTHER" id="PTHR45625">
    <property type="entry name" value="PEPTIDYL-PROLYL CIS-TRANS ISOMERASE-RELATED"/>
    <property type="match status" value="1"/>
</dbReference>
<dbReference type="PANTHER" id="PTHR45625:SF4">
    <property type="entry name" value="PEPTIDYLPROLYL ISOMERASE DOMAIN AND WD REPEAT-CONTAINING PROTEIN 1"/>
    <property type="match status" value="1"/>
</dbReference>
<dbReference type="Pfam" id="PF00160">
    <property type="entry name" value="Pro_isomerase"/>
    <property type="match status" value="1"/>
</dbReference>
<dbReference type="PIRSF" id="PIRSF001467">
    <property type="entry name" value="Peptidylpro_ismrse"/>
    <property type="match status" value="1"/>
</dbReference>
<dbReference type="PRINTS" id="PR00153">
    <property type="entry name" value="CSAPPISMRASE"/>
</dbReference>
<dbReference type="SUPFAM" id="SSF50891">
    <property type="entry name" value="Cyclophilin-like"/>
    <property type="match status" value="1"/>
</dbReference>
<dbReference type="PROSITE" id="PS00170">
    <property type="entry name" value="CSA_PPIASE_1"/>
    <property type="match status" value="1"/>
</dbReference>
<dbReference type="PROSITE" id="PS50072">
    <property type="entry name" value="CSA_PPIASE_2"/>
    <property type="match status" value="1"/>
</dbReference>
<keyword id="KW-0143">Chaperone</keyword>
<keyword id="KW-0963">Cytoplasm</keyword>
<keyword id="KW-0413">Isomerase</keyword>
<keyword id="KW-1185">Reference proteome</keyword>
<keyword id="KW-0697">Rotamase</keyword>
<sequence>MSARPEGSPPEVTLETSMGPFTVEMYYKHSPRTCRNFLELSRRGYYDNVLFHRIVKDFIVQGGDPTGTGRGGESIYGSKFEDEINKELKHTGAGILSMANAGPNTNGSQFFITLAPQPSLDGKHTIFGRVCRGMEVIKRLGSVQTDNTDRPIHEVKILRTKVID</sequence>
<evidence type="ECO:0000250" key="1"/>
<evidence type="ECO:0000255" key="2">
    <source>
        <dbReference type="PROSITE-ProRule" id="PRU00156"/>
    </source>
</evidence>
<evidence type="ECO:0000269" key="3">
    <source>
    </source>
</evidence>
<evidence type="ECO:0000269" key="4">
    <source>
    </source>
</evidence>
<evidence type="ECO:0000305" key="5"/>
<feature type="chain" id="PRO_0000429933" description="Peptidyl-prolyl cis-trans isomerase CYP18-2">
    <location>
        <begin position="1"/>
        <end position="164"/>
    </location>
</feature>
<feature type="domain" description="PPIase cyclophilin-type" evidence="2">
    <location>
        <begin position="12"/>
        <end position="162"/>
    </location>
</feature>
<feature type="sequence conflict" description="In Ref. 5; AAM61561." evidence="5" ref="5">
    <original>G</original>
    <variation>V</variation>
    <location>
        <position position="94"/>
    </location>
</feature>